<proteinExistence type="inferred from homology"/>
<accession>Q9Y7R8</accession>
<sequence length="341" mass="35787">MFAKVAFKNFTPLKSIAPRSFSTTSSRAFKVAVLGAGGGIGQPLSMLLKLNDKVSELALFDIRGAPGVAADIGHINTTSNVVGYAPDDKGLEKALNGADVVIIPAGVPRKPGMTRDDLFATNASIVRDLAFAAGETCPEAKYLVVTNPVNSTVPIFKKALERVGVHQPKHLFGVTTLDSVRASRFTSQVTNGKAELLHIPVVGGHSGATIVPLLSQGGVELTGEKRDALIHRIQFGGDEVVKAKAGAGSATLSMAYAGARMASSVLRALAGESGVEECTFVESPLYKDQGIDFFASRVTLGKDGVDTIHPVGKINDYEESLLKVALGELKKSITKGEQFVA</sequence>
<keyword id="KW-0496">Mitochondrion</keyword>
<keyword id="KW-0520">NAD</keyword>
<keyword id="KW-0560">Oxidoreductase</keyword>
<keyword id="KW-1185">Reference proteome</keyword>
<keyword id="KW-0809">Transit peptide</keyword>
<keyword id="KW-0816">Tricarboxylic acid cycle</keyword>
<gene>
    <name type="primary">MDH1</name>
    <name type="ORF">SPCC306.08c</name>
</gene>
<reference key="1">
    <citation type="journal article" date="2002" name="Nature">
        <title>The genome sequence of Schizosaccharomyces pombe.</title>
        <authorList>
            <person name="Wood V."/>
            <person name="Gwilliam R."/>
            <person name="Rajandream M.A."/>
            <person name="Lyne M.H."/>
            <person name="Lyne R."/>
            <person name="Stewart A."/>
            <person name="Sgouros J.G."/>
            <person name="Peat N."/>
            <person name="Hayles J."/>
            <person name="Baker S.G."/>
            <person name="Basham D."/>
            <person name="Bowman S."/>
            <person name="Brooks K."/>
            <person name="Brown D."/>
            <person name="Brown S."/>
            <person name="Chillingworth T."/>
            <person name="Churcher C.M."/>
            <person name="Collins M."/>
            <person name="Connor R."/>
            <person name="Cronin A."/>
            <person name="Davis P."/>
            <person name="Feltwell T."/>
            <person name="Fraser A."/>
            <person name="Gentles S."/>
            <person name="Goble A."/>
            <person name="Hamlin N."/>
            <person name="Harris D.E."/>
            <person name="Hidalgo J."/>
            <person name="Hodgson G."/>
            <person name="Holroyd S."/>
            <person name="Hornsby T."/>
            <person name="Howarth S."/>
            <person name="Huckle E.J."/>
            <person name="Hunt S."/>
            <person name="Jagels K."/>
            <person name="James K.D."/>
            <person name="Jones L."/>
            <person name="Jones M."/>
            <person name="Leather S."/>
            <person name="McDonald S."/>
            <person name="McLean J."/>
            <person name="Mooney P."/>
            <person name="Moule S."/>
            <person name="Mungall K.L."/>
            <person name="Murphy L.D."/>
            <person name="Niblett D."/>
            <person name="Odell C."/>
            <person name="Oliver K."/>
            <person name="O'Neil S."/>
            <person name="Pearson D."/>
            <person name="Quail M.A."/>
            <person name="Rabbinowitsch E."/>
            <person name="Rutherford K.M."/>
            <person name="Rutter S."/>
            <person name="Saunders D."/>
            <person name="Seeger K."/>
            <person name="Sharp S."/>
            <person name="Skelton J."/>
            <person name="Simmonds M.N."/>
            <person name="Squares R."/>
            <person name="Squares S."/>
            <person name="Stevens K."/>
            <person name="Taylor K."/>
            <person name="Taylor R.G."/>
            <person name="Tivey A."/>
            <person name="Walsh S.V."/>
            <person name="Warren T."/>
            <person name="Whitehead S."/>
            <person name="Woodward J.R."/>
            <person name="Volckaert G."/>
            <person name="Aert R."/>
            <person name="Robben J."/>
            <person name="Grymonprez B."/>
            <person name="Weltjens I."/>
            <person name="Vanstreels E."/>
            <person name="Rieger M."/>
            <person name="Schaefer M."/>
            <person name="Mueller-Auer S."/>
            <person name="Gabel C."/>
            <person name="Fuchs M."/>
            <person name="Duesterhoeft A."/>
            <person name="Fritzc C."/>
            <person name="Holzer E."/>
            <person name="Moestl D."/>
            <person name="Hilbert H."/>
            <person name="Borzym K."/>
            <person name="Langer I."/>
            <person name="Beck A."/>
            <person name="Lehrach H."/>
            <person name="Reinhardt R."/>
            <person name="Pohl T.M."/>
            <person name="Eger P."/>
            <person name="Zimmermann W."/>
            <person name="Wedler H."/>
            <person name="Wambutt R."/>
            <person name="Purnelle B."/>
            <person name="Goffeau A."/>
            <person name="Cadieu E."/>
            <person name="Dreano S."/>
            <person name="Gloux S."/>
            <person name="Lelaure V."/>
            <person name="Mottier S."/>
            <person name="Galibert F."/>
            <person name="Aves S.J."/>
            <person name="Xiang Z."/>
            <person name="Hunt C."/>
            <person name="Moore K."/>
            <person name="Hurst S.M."/>
            <person name="Lucas M."/>
            <person name="Rochet M."/>
            <person name="Gaillardin C."/>
            <person name="Tallada V.A."/>
            <person name="Garzon A."/>
            <person name="Thode G."/>
            <person name="Daga R.R."/>
            <person name="Cruzado L."/>
            <person name="Jimenez J."/>
            <person name="Sanchez M."/>
            <person name="del Rey F."/>
            <person name="Benito J."/>
            <person name="Dominguez A."/>
            <person name="Revuelta J.L."/>
            <person name="Moreno S."/>
            <person name="Armstrong J."/>
            <person name="Forsburg S.L."/>
            <person name="Cerutti L."/>
            <person name="Lowe T."/>
            <person name="McCombie W.R."/>
            <person name="Paulsen I."/>
            <person name="Potashkin J."/>
            <person name="Shpakovski G.V."/>
            <person name="Ussery D."/>
            <person name="Barrell B.G."/>
            <person name="Nurse P."/>
        </authorList>
    </citation>
    <scope>NUCLEOTIDE SEQUENCE [LARGE SCALE GENOMIC DNA]</scope>
    <source>
        <strain>972 / ATCC 24843</strain>
    </source>
</reference>
<reference key="2">
    <citation type="journal article" date="2006" name="Nat. Biotechnol.">
        <title>ORFeome cloning and global analysis of protein localization in the fission yeast Schizosaccharomyces pombe.</title>
        <authorList>
            <person name="Matsuyama A."/>
            <person name="Arai R."/>
            <person name="Yashiroda Y."/>
            <person name="Shirai A."/>
            <person name="Kamata A."/>
            <person name="Sekido S."/>
            <person name="Kobayashi Y."/>
            <person name="Hashimoto A."/>
            <person name="Hamamoto M."/>
            <person name="Hiraoka Y."/>
            <person name="Horinouchi S."/>
            <person name="Yoshida M."/>
        </authorList>
    </citation>
    <scope>SUBCELLULAR LOCATION [LARGE SCALE ANALYSIS]</scope>
</reference>
<evidence type="ECO:0000250" key="1"/>
<evidence type="ECO:0000255" key="2"/>
<evidence type="ECO:0000269" key="3">
    <source>
    </source>
</evidence>
<evidence type="ECO:0000305" key="4"/>
<organism>
    <name type="scientific">Schizosaccharomyces pombe (strain 972 / ATCC 24843)</name>
    <name type="common">Fission yeast</name>
    <dbReference type="NCBI Taxonomy" id="284812"/>
    <lineage>
        <taxon>Eukaryota</taxon>
        <taxon>Fungi</taxon>
        <taxon>Dikarya</taxon>
        <taxon>Ascomycota</taxon>
        <taxon>Taphrinomycotina</taxon>
        <taxon>Schizosaccharomycetes</taxon>
        <taxon>Schizosaccharomycetales</taxon>
        <taxon>Schizosaccharomycetaceae</taxon>
        <taxon>Schizosaccharomyces</taxon>
    </lineage>
</organism>
<name>MDHM_SCHPO</name>
<protein>
    <recommendedName>
        <fullName>Malate dehydrogenase, mitochondrial</fullName>
        <ecNumber>1.1.1.37</ecNumber>
    </recommendedName>
</protein>
<dbReference type="EC" id="1.1.1.37"/>
<dbReference type="EMBL" id="CU329672">
    <property type="protein sequence ID" value="CAB41656.1"/>
    <property type="molecule type" value="Genomic_DNA"/>
</dbReference>
<dbReference type="PIR" id="T41286">
    <property type="entry name" value="T41286"/>
</dbReference>
<dbReference type="RefSeq" id="NP_587816.1">
    <property type="nucleotide sequence ID" value="NM_001022809.2"/>
</dbReference>
<dbReference type="SMR" id="Q9Y7R8"/>
<dbReference type="BioGRID" id="275349">
    <property type="interactions" value="3"/>
</dbReference>
<dbReference type="FunCoup" id="Q9Y7R8">
    <property type="interactions" value="693"/>
</dbReference>
<dbReference type="STRING" id="284812.Q9Y7R8"/>
<dbReference type="iPTMnet" id="Q9Y7R8"/>
<dbReference type="PaxDb" id="4896-SPCC306.08c.1"/>
<dbReference type="EnsemblFungi" id="SPCC306.08c.1">
    <property type="protein sequence ID" value="SPCC306.08c.1:pep"/>
    <property type="gene ID" value="SPCC306.08c"/>
</dbReference>
<dbReference type="PomBase" id="SPCC306.08c"/>
<dbReference type="VEuPathDB" id="FungiDB:SPCC306.08c"/>
<dbReference type="eggNOG" id="KOG1494">
    <property type="taxonomic scope" value="Eukaryota"/>
</dbReference>
<dbReference type="HOGENOM" id="CLU_047181_1_0_1"/>
<dbReference type="InParanoid" id="Q9Y7R8"/>
<dbReference type="OMA" id="ASCAEYI"/>
<dbReference type="PhylomeDB" id="Q9Y7R8"/>
<dbReference type="Reactome" id="R-SPO-71403">
    <property type="pathway name" value="Citric acid cycle (TCA cycle)"/>
</dbReference>
<dbReference type="Reactome" id="R-SPO-9837999">
    <property type="pathway name" value="Mitochondrial protein degradation"/>
</dbReference>
<dbReference type="Reactome" id="R-SPO-9856872">
    <property type="pathway name" value="Malate-aspartate shuttle"/>
</dbReference>
<dbReference type="PRO" id="PR:Q9Y7R8"/>
<dbReference type="Proteomes" id="UP000002485">
    <property type="component" value="Chromosome III"/>
</dbReference>
<dbReference type="GO" id="GO:0005737">
    <property type="term" value="C:cytoplasm"/>
    <property type="evidence" value="ECO:0000318"/>
    <property type="project" value="GO_Central"/>
</dbReference>
<dbReference type="GO" id="GO:0005759">
    <property type="term" value="C:mitochondrial matrix"/>
    <property type="evidence" value="ECO:0000250"/>
    <property type="project" value="PomBase"/>
</dbReference>
<dbReference type="GO" id="GO:0005739">
    <property type="term" value="C:mitochondrion"/>
    <property type="evidence" value="ECO:0007005"/>
    <property type="project" value="PomBase"/>
</dbReference>
<dbReference type="GO" id="GO:0030060">
    <property type="term" value="F:L-malate dehydrogenase (NAD+) activity"/>
    <property type="evidence" value="ECO:0000318"/>
    <property type="project" value="GO_Central"/>
</dbReference>
<dbReference type="GO" id="GO:0019752">
    <property type="term" value="P:carboxylic acid metabolic process"/>
    <property type="evidence" value="ECO:0007669"/>
    <property type="project" value="InterPro"/>
</dbReference>
<dbReference type="GO" id="GO:0006099">
    <property type="term" value="P:tricarboxylic acid cycle"/>
    <property type="evidence" value="ECO:0000269"/>
    <property type="project" value="PomBase"/>
</dbReference>
<dbReference type="CDD" id="cd01337">
    <property type="entry name" value="MDH_glyoxysomal_mitochondrial"/>
    <property type="match status" value="1"/>
</dbReference>
<dbReference type="FunFam" id="3.40.50.720:FF:000013">
    <property type="entry name" value="Malate dehydrogenase"/>
    <property type="match status" value="1"/>
</dbReference>
<dbReference type="FunFam" id="3.90.110.10:FF:000001">
    <property type="entry name" value="Malate dehydrogenase"/>
    <property type="match status" value="1"/>
</dbReference>
<dbReference type="Gene3D" id="3.90.110.10">
    <property type="entry name" value="Lactate dehydrogenase/glycoside hydrolase, family 4, C-terminal"/>
    <property type="match status" value="1"/>
</dbReference>
<dbReference type="Gene3D" id="3.40.50.720">
    <property type="entry name" value="NAD(P)-binding Rossmann-like Domain"/>
    <property type="match status" value="1"/>
</dbReference>
<dbReference type="InterPro" id="IPR001557">
    <property type="entry name" value="L-lactate/malate_DH"/>
</dbReference>
<dbReference type="InterPro" id="IPR022383">
    <property type="entry name" value="Lactate/malate_DH_C"/>
</dbReference>
<dbReference type="InterPro" id="IPR001236">
    <property type="entry name" value="Lactate/malate_DH_N"/>
</dbReference>
<dbReference type="InterPro" id="IPR015955">
    <property type="entry name" value="Lactate_DH/Glyco_Ohase_4_C"/>
</dbReference>
<dbReference type="InterPro" id="IPR010097">
    <property type="entry name" value="Malate_DH_type1"/>
</dbReference>
<dbReference type="InterPro" id="IPR036291">
    <property type="entry name" value="NAD(P)-bd_dom_sf"/>
</dbReference>
<dbReference type="NCBIfam" id="TIGR01772">
    <property type="entry name" value="MDH_euk_gproteo"/>
    <property type="match status" value="1"/>
</dbReference>
<dbReference type="PANTHER" id="PTHR11540">
    <property type="entry name" value="MALATE AND LACTATE DEHYDROGENASE"/>
    <property type="match status" value="1"/>
</dbReference>
<dbReference type="PANTHER" id="PTHR11540:SF73">
    <property type="entry name" value="MALATE DEHYDROGENASE, MITOCHONDRIAL"/>
    <property type="match status" value="1"/>
</dbReference>
<dbReference type="Pfam" id="PF02866">
    <property type="entry name" value="Ldh_1_C"/>
    <property type="match status" value="1"/>
</dbReference>
<dbReference type="Pfam" id="PF00056">
    <property type="entry name" value="Ldh_1_N"/>
    <property type="match status" value="1"/>
</dbReference>
<dbReference type="PIRSF" id="PIRSF000102">
    <property type="entry name" value="Lac_mal_DH"/>
    <property type="match status" value="1"/>
</dbReference>
<dbReference type="SUPFAM" id="SSF56327">
    <property type="entry name" value="LDH C-terminal domain-like"/>
    <property type="match status" value="1"/>
</dbReference>
<dbReference type="SUPFAM" id="SSF51735">
    <property type="entry name" value="NAD(P)-binding Rossmann-fold domains"/>
    <property type="match status" value="1"/>
</dbReference>
<feature type="transit peptide" description="Mitochondrion" evidence="2">
    <location>
        <begin position="1"/>
        <end status="unknown"/>
    </location>
</feature>
<feature type="chain" id="PRO_0000310436" description="Malate dehydrogenase, mitochondrial">
    <location>
        <begin status="unknown"/>
        <end position="341"/>
    </location>
</feature>
<feature type="active site" description="Proton acceptor" evidence="1">
    <location>
        <position position="205"/>
    </location>
</feature>
<feature type="binding site" evidence="1">
    <location>
        <begin position="35"/>
        <end position="41"/>
    </location>
    <ligand>
        <name>NAD(+)</name>
        <dbReference type="ChEBI" id="CHEBI:57540"/>
    </ligand>
</feature>
<feature type="binding site" evidence="1">
    <location>
        <position position="61"/>
    </location>
    <ligand>
        <name>NAD(+)</name>
        <dbReference type="ChEBI" id="CHEBI:57540"/>
    </ligand>
</feature>
<feature type="binding site" evidence="1">
    <location>
        <position position="109"/>
    </location>
    <ligand>
        <name>substrate</name>
    </ligand>
</feature>
<feature type="binding site" evidence="1">
    <location>
        <position position="115"/>
    </location>
    <ligand>
        <name>substrate</name>
    </ligand>
</feature>
<feature type="binding site" evidence="1">
    <location>
        <position position="122"/>
    </location>
    <ligand>
        <name>NAD(+)</name>
        <dbReference type="ChEBI" id="CHEBI:57540"/>
    </ligand>
</feature>
<feature type="binding site" evidence="1">
    <location>
        <position position="147"/>
    </location>
    <ligand>
        <name>substrate</name>
    </ligand>
</feature>
<feature type="binding site" evidence="1">
    <location>
        <position position="181"/>
    </location>
    <ligand>
        <name>substrate</name>
    </ligand>
</feature>
<feature type="binding site" evidence="1">
    <location>
        <position position="254"/>
    </location>
    <ligand>
        <name>NAD(+)</name>
        <dbReference type="ChEBI" id="CHEBI:57540"/>
    </ligand>
</feature>
<comment type="catalytic activity">
    <reaction>
        <text>(S)-malate + NAD(+) = oxaloacetate + NADH + H(+)</text>
        <dbReference type="Rhea" id="RHEA:21432"/>
        <dbReference type="ChEBI" id="CHEBI:15378"/>
        <dbReference type="ChEBI" id="CHEBI:15589"/>
        <dbReference type="ChEBI" id="CHEBI:16452"/>
        <dbReference type="ChEBI" id="CHEBI:57540"/>
        <dbReference type="ChEBI" id="CHEBI:57945"/>
        <dbReference type="EC" id="1.1.1.37"/>
    </reaction>
</comment>
<comment type="subunit">
    <text evidence="1">Homodimer.</text>
</comment>
<comment type="subcellular location">
    <subcellularLocation>
        <location evidence="3">Mitochondrion matrix</location>
    </subcellularLocation>
</comment>
<comment type="similarity">
    <text evidence="4">Belongs to the LDH/MDH superfamily. MDH type 1 family.</text>
</comment>